<proteinExistence type="evidence at protein level"/>
<accession>P43671</accession>
<accession>P77534</accession>
<gene>
    <name evidence="6" type="primary">pqiB</name>
    <name evidence="7" type="synonym">pqi5B</name>
    <name type="ordered locus">b0951</name>
    <name type="ordered locus">JW0934</name>
</gene>
<reference key="1">
    <citation type="journal article" date="1996" name="DNA Res.">
        <title>A 718-kb DNA sequence of the Escherichia coli K-12 genome corresponding to the 12.7-28.0 min region on the linkage map.</title>
        <authorList>
            <person name="Oshima T."/>
            <person name="Aiba H."/>
            <person name="Baba T."/>
            <person name="Fujita K."/>
            <person name="Hayashi K."/>
            <person name="Honjo A."/>
            <person name="Ikemoto K."/>
            <person name="Inada T."/>
            <person name="Itoh T."/>
            <person name="Kajihara M."/>
            <person name="Kanai K."/>
            <person name="Kashimoto K."/>
            <person name="Kimura S."/>
            <person name="Kitagawa M."/>
            <person name="Makino K."/>
            <person name="Masuda S."/>
            <person name="Miki T."/>
            <person name="Mizobuchi K."/>
            <person name="Mori H."/>
            <person name="Motomura K."/>
            <person name="Nakamura Y."/>
            <person name="Nashimoto H."/>
            <person name="Nishio Y."/>
            <person name="Saito N."/>
            <person name="Sampei G."/>
            <person name="Seki Y."/>
            <person name="Tagami H."/>
            <person name="Takemoto K."/>
            <person name="Wada C."/>
            <person name="Yamamoto Y."/>
            <person name="Yano M."/>
            <person name="Horiuchi T."/>
        </authorList>
    </citation>
    <scope>NUCLEOTIDE SEQUENCE [LARGE SCALE GENOMIC DNA]</scope>
    <source>
        <strain>K12 / W3110 / ATCC 27325 / DSM 5911</strain>
    </source>
</reference>
<reference key="2">
    <citation type="journal article" date="1997" name="Science">
        <title>The complete genome sequence of Escherichia coli K-12.</title>
        <authorList>
            <person name="Blattner F.R."/>
            <person name="Plunkett G. III"/>
            <person name="Bloch C.A."/>
            <person name="Perna N.T."/>
            <person name="Burland V."/>
            <person name="Riley M."/>
            <person name="Collado-Vides J."/>
            <person name="Glasner J.D."/>
            <person name="Rode C.K."/>
            <person name="Mayhew G.F."/>
            <person name="Gregor J."/>
            <person name="Davis N.W."/>
            <person name="Kirkpatrick H.A."/>
            <person name="Goeden M.A."/>
            <person name="Rose D.J."/>
            <person name="Mau B."/>
            <person name="Shao Y."/>
        </authorList>
    </citation>
    <scope>NUCLEOTIDE SEQUENCE [LARGE SCALE GENOMIC DNA]</scope>
    <source>
        <strain>K12 / MG1655 / ATCC 47076</strain>
    </source>
</reference>
<reference key="3">
    <citation type="journal article" date="2006" name="Mol. Syst. Biol.">
        <title>Highly accurate genome sequences of Escherichia coli K-12 strains MG1655 and W3110.</title>
        <authorList>
            <person name="Hayashi K."/>
            <person name="Morooka N."/>
            <person name="Yamamoto Y."/>
            <person name="Fujita K."/>
            <person name="Isono K."/>
            <person name="Choi S."/>
            <person name="Ohtsubo E."/>
            <person name="Baba T."/>
            <person name="Wanner B.L."/>
            <person name="Mori H."/>
            <person name="Horiuchi T."/>
        </authorList>
    </citation>
    <scope>NUCLEOTIDE SEQUENCE [LARGE SCALE GENOMIC DNA]</scope>
    <source>
        <strain>K12 / W3110 / ATCC 27325 / DSM 5911</strain>
    </source>
</reference>
<reference key="4">
    <citation type="journal article" date="1995" name="J. Bacteriol.">
        <title>Isolation of a novel paraquat-inducible (pqi) gene regulated by the soxRS locus in Escherichia coli.</title>
        <authorList>
            <person name="Koh Y.-S."/>
            <person name="Roe J.-H."/>
        </authorList>
    </citation>
    <scope>NUCLEOTIDE SEQUENCE [GENOMIC DNA] OF 1-92</scope>
    <scope>INDUCTION</scope>
    <source>
        <strain>K12 / W3110 / ATCC 27325 / DSM 5911</strain>
    </source>
</reference>
<reference key="5">
    <citation type="journal article" date="2017" name="J. Bacteriol.">
        <title>pqiABC and yebST, putative mce operons of Escherichia coli, encode transport pathways and contribute to membrane integrity.</title>
        <authorList>
            <person name="Nakayama T."/>
            <person name="Zhang-Akiyama Q.M."/>
        </authorList>
    </citation>
    <scope>FUNCTION</scope>
    <scope>SUBUNIT</scope>
    <scope>INTERACTION WITH PQIC</scope>
    <scope>SUBCELLULAR LOCATION</scope>
    <scope>TOPOLOGY</scope>
</reference>
<reference key="6">
    <citation type="journal article" date="2017" name="Sci. Rep.">
        <title>MCE domain proteins: conserved inner membrane lipid-binding proteins required for outer membrane homeostasis.</title>
        <authorList>
            <person name="Isom G.L."/>
            <person name="Davies N.J."/>
            <person name="Chong Z.S."/>
            <person name="Bryant J.A."/>
            <person name="Jamshad M."/>
            <person name="Sharif M."/>
            <person name="Cunningham A.F."/>
            <person name="Knowles T.J."/>
            <person name="Chng S.S."/>
            <person name="Cole J.A."/>
            <person name="Henderson I.R."/>
        </authorList>
    </citation>
    <scope>FUNCTION</scope>
    <scope>SUBCELLULAR LOCATION</scope>
    <scope>DISRUPTION PHENOTYPE</scope>
</reference>
<reference evidence="10" key="7">
    <citation type="journal article" date="2017" name="Cell">
        <title>Architectures of lipid transport systems for the bacterial outer membrane.</title>
        <authorList>
            <person name="Ekiert D.C."/>
            <person name="Bhabha G."/>
            <person name="Isom G.L."/>
            <person name="Greenan G."/>
            <person name="Ovchinnikov S."/>
            <person name="Henderson I.R."/>
            <person name="Cox J.S."/>
            <person name="Vale R.D."/>
        </authorList>
    </citation>
    <scope>STRUCTURE BY ELECTRON MICROSCOPY (3.96 ANGSTROMS) OF 39-431</scope>
    <scope>FUNCTION</scope>
    <scope>SUBUNIT</scope>
    <scope>DOMAIN</scope>
    <source>
        <strain>K12</strain>
    </source>
</reference>
<dbReference type="EMBL" id="U00096">
    <property type="protein sequence ID" value="AAC74037.1"/>
    <property type="molecule type" value="Genomic_DNA"/>
</dbReference>
<dbReference type="EMBL" id="AP009048">
    <property type="protein sequence ID" value="BAA35709.1"/>
    <property type="molecule type" value="Genomic_DNA"/>
</dbReference>
<dbReference type="EMBL" id="X81561">
    <property type="protein sequence ID" value="CAA57257.1"/>
    <property type="molecule type" value="Genomic_DNA"/>
</dbReference>
<dbReference type="PIR" id="F64835">
    <property type="entry name" value="F64835"/>
</dbReference>
<dbReference type="RefSeq" id="NP_415471.1">
    <property type="nucleotide sequence ID" value="NC_000913.3"/>
</dbReference>
<dbReference type="RefSeq" id="WP_000445533.1">
    <property type="nucleotide sequence ID" value="NZ_SSZK01000002.1"/>
</dbReference>
<dbReference type="PDB" id="5UVN">
    <property type="method" value="EM"/>
    <property type="resolution" value="3.96 A"/>
    <property type="chains" value="A/B/C/D/E/F=39-431"/>
</dbReference>
<dbReference type="PDBsum" id="5UVN"/>
<dbReference type="EMDB" id="EMD-8608"/>
<dbReference type="SMR" id="P43671"/>
<dbReference type="BioGRID" id="4260028">
    <property type="interactions" value="7"/>
</dbReference>
<dbReference type="DIP" id="DIP-10555N"/>
<dbReference type="FunCoup" id="P43671">
    <property type="interactions" value="61"/>
</dbReference>
<dbReference type="IntAct" id="P43671">
    <property type="interactions" value="4"/>
</dbReference>
<dbReference type="STRING" id="511145.b0951"/>
<dbReference type="TCDB" id="9.A.69.1.1">
    <property type="family name" value="the intermembrane phospholipid translocase (impl-t) family"/>
</dbReference>
<dbReference type="jPOST" id="P43671"/>
<dbReference type="PaxDb" id="511145-b0951"/>
<dbReference type="EnsemblBacteria" id="AAC74037">
    <property type="protein sequence ID" value="AAC74037"/>
    <property type="gene ID" value="b0951"/>
</dbReference>
<dbReference type="GeneID" id="75204042"/>
<dbReference type="GeneID" id="945653"/>
<dbReference type="KEGG" id="ecj:JW0934"/>
<dbReference type="KEGG" id="eco:b0951"/>
<dbReference type="KEGG" id="ecoc:C3026_05820"/>
<dbReference type="PATRIC" id="fig|1411691.4.peg.1323"/>
<dbReference type="EchoBASE" id="EB2795"/>
<dbReference type="eggNOG" id="COG1463">
    <property type="taxonomic scope" value="Bacteria"/>
</dbReference>
<dbReference type="eggNOG" id="COG3008">
    <property type="taxonomic scope" value="Bacteria"/>
</dbReference>
<dbReference type="HOGENOM" id="CLU_018765_3_1_6"/>
<dbReference type="InParanoid" id="P43671"/>
<dbReference type="OMA" id="HHVEIKA"/>
<dbReference type="OrthoDB" id="9806984at2"/>
<dbReference type="PhylomeDB" id="P43671"/>
<dbReference type="BioCyc" id="EcoCyc:G6491-MONOMER"/>
<dbReference type="PRO" id="PR:P43671"/>
<dbReference type="Proteomes" id="UP000000625">
    <property type="component" value="Chromosome"/>
</dbReference>
<dbReference type="GO" id="GO:0030288">
    <property type="term" value="C:outer membrane-bounded periplasmic space"/>
    <property type="evidence" value="ECO:0000314"/>
    <property type="project" value="EcoCyc"/>
</dbReference>
<dbReference type="GO" id="GO:0005886">
    <property type="term" value="C:plasma membrane"/>
    <property type="evidence" value="ECO:0000318"/>
    <property type="project" value="GO_Central"/>
</dbReference>
<dbReference type="GO" id="GO:0042802">
    <property type="term" value="F:identical protein binding"/>
    <property type="evidence" value="ECO:0000314"/>
    <property type="project" value="EcoCyc"/>
</dbReference>
<dbReference type="GO" id="GO:0120009">
    <property type="term" value="P:intermembrane lipid transfer"/>
    <property type="evidence" value="ECO:0000314"/>
    <property type="project" value="EcoCyc"/>
</dbReference>
<dbReference type="GO" id="GO:0061024">
    <property type="term" value="P:membrane organization"/>
    <property type="evidence" value="ECO:0000269"/>
    <property type="project" value="EcoCyc"/>
</dbReference>
<dbReference type="InterPro" id="IPR003399">
    <property type="entry name" value="Mce/MlaD"/>
</dbReference>
<dbReference type="InterPro" id="IPR051800">
    <property type="entry name" value="PqiA-PqiB_transport"/>
</dbReference>
<dbReference type="NCBIfam" id="NF008070">
    <property type="entry name" value="PRK10807.1"/>
    <property type="match status" value="1"/>
</dbReference>
<dbReference type="PANTHER" id="PTHR30462:SF2">
    <property type="entry name" value="INTERMEMBRANE TRANSPORT PROTEIN PQIB"/>
    <property type="match status" value="1"/>
</dbReference>
<dbReference type="PANTHER" id="PTHR30462">
    <property type="entry name" value="INTERMEMBRANE TRANSPORT PROTEIN PQIB-RELATED"/>
    <property type="match status" value="1"/>
</dbReference>
<dbReference type="Pfam" id="PF02470">
    <property type="entry name" value="MlaD"/>
    <property type="match status" value="3"/>
</dbReference>
<keyword id="KW-0002">3D-structure</keyword>
<keyword id="KW-0997">Cell inner membrane</keyword>
<keyword id="KW-1003">Cell membrane</keyword>
<keyword id="KW-0175">Coiled coil</keyword>
<keyword id="KW-0472">Membrane</keyword>
<keyword id="KW-1185">Reference proteome</keyword>
<keyword id="KW-0677">Repeat</keyword>
<keyword id="KW-0812">Transmembrane</keyword>
<keyword id="KW-1133">Transmembrane helix</keyword>
<organism>
    <name type="scientific">Escherichia coli (strain K12)</name>
    <dbReference type="NCBI Taxonomy" id="83333"/>
    <lineage>
        <taxon>Bacteria</taxon>
        <taxon>Pseudomonadati</taxon>
        <taxon>Pseudomonadota</taxon>
        <taxon>Gammaproteobacteria</taxon>
        <taxon>Enterobacterales</taxon>
        <taxon>Enterobacteriaceae</taxon>
        <taxon>Escherichia</taxon>
    </lineage>
</organism>
<protein>
    <recommendedName>
        <fullName evidence="8">Intermembrane transport protein PqiB</fullName>
    </recommendedName>
    <alternativeName>
        <fullName>Paraquat-inducible protein B</fullName>
    </alternativeName>
</protein>
<sequence length="546" mass="60520">MESNNGEAKIQKVKNWSPVWIFPIVTALIGAWVLFYHYSHQGPEVTLITANAEGIEGGKTTIKSRSVDVGVVESATLADDLTHVEIKARLNSGMEKLLHKDTVFWVVKPQIGREGISGLGTLLSGVYIELQPGAKGSKMDKYDLLDSPPLAPPDAKGIRVILDSKKAGQLSPGDPVLFRGYRVGSVETSTFDTQKRNISYQLFINAPYDRLVTNNVRFWKDSGIAVDLTSAGMRVEMGSLTTLLSGGVSFDVPEGLDLGQPVAPKTAFVLYDDQKSIQDSLYTDHIDYLMFFKDSVRGLQPGAPVEFRGIRLGTVSKVPFFAPNMRQTFNDDYRIPVLIRIEPERLKMQLGENADVVEHLGELLKRGLRGSLKTGNLVTGALYVDLDFYPNTPAITGIREFNGYQIIPTVSGGLAQIQQRLMEALDKINKLPLNPMIEQATSTLSESQRTMKNLQTTLDSMNKILASQSMQQLPTDMQSTLRELNRSMQGFQPGSAAYNKMVADMQRLDQVLRELQPVLKTLNEKSNALVFEAKDKKDPEPKRAKQ</sequence>
<evidence type="ECO:0000255" key="1"/>
<evidence type="ECO:0000269" key="2">
    <source>
    </source>
</evidence>
<evidence type="ECO:0000269" key="3">
    <source>
    </source>
</evidence>
<evidence type="ECO:0000269" key="4">
    <source>
    </source>
</evidence>
<evidence type="ECO:0000269" key="5">
    <source>
    </source>
</evidence>
<evidence type="ECO:0000303" key="6">
    <source>
    </source>
</evidence>
<evidence type="ECO:0000303" key="7">
    <source>
    </source>
</evidence>
<evidence type="ECO:0000305" key="8"/>
<evidence type="ECO:0000305" key="9">
    <source>
    </source>
</evidence>
<evidence type="ECO:0007744" key="10">
    <source>
        <dbReference type="PDB" id="5UVN"/>
    </source>
</evidence>
<feature type="chain" id="PRO_0000058557" description="Intermembrane transport protein PqiB">
    <location>
        <begin position="1"/>
        <end position="546"/>
    </location>
</feature>
<feature type="topological domain" description="Cytoplasmic" evidence="9">
    <location>
        <begin position="1"/>
        <end position="15"/>
    </location>
</feature>
<feature type="transmembrane region" description="Helical" evidence="1">
    <location>
        <begin position="16"/>
        <end position="36"/>
    </location>
</feature>
<feature type="topological domain" description="Periplasmic" evidence="2">
    <location>
        <begin position="37"/>
        <end position="546"/>
    </location>
</feature>
<feature type="region of interest" description="MCE/MlaD 1" evidence="8">
    <location>
        <begin position="42"/>
        <end position="133"/>
    </location>
</feature>
<feature type="region of interest" description="MCE/MlaD 2" evidence="8">
    <location>
        <begin position="158"/>
        <end position="217"/>
    </location>
</feature>
<feature type="region of interest" description="MCE/MlaD 3" evidence="8">
    <location>
        <begin position="285"/>
        <end position="389"/>
    </location>
</feature>
<feature type="coiled-coil region" evidence="1">
    <location>
        <begin position="437"/>
        <end position="464"/>
    </location>
</feature>
<name>PQIB_ECOLI</name>
<comment type="function">
    <text evidence="2 3 4">Forms a tunnel that spans the entire periplasmic space (PubMed:28388411). Could be implicated in lipid transport between the inner membrane and the outer membrane (PubMed:28388411). Binds phospholipids (PubMed:28388411). Required for outer membrane homeostasis (PubMed:28819315). Contributes to membrane integrity (PubMed:27795327).</text>
</comment>
<comment type="subunit">
    <text evidence="2 3">Homohexamer (PubMed:28388411). May form a complex composed of PqiA, PqiB and PqiC. Interacts with PqiC (PubMed:27795327).</text>
</comment>
<comment type="subcellular location">
    <subcellularLocation>
        <location evidence="4">Cell inner membrane</location>
        <topology evidence="1">Single-pass membrane protein</topology>
        <orientation evidence="2">Periplasmic side</orientation>
    </subcellularLocation>
</comment>
<comment type="induction">
    <text evidence="5">By paraquat.</text>
</comment>
<comment type="domain">
    <text evidence="3">Forms a syringe-like architecture with a central channel.</text>
</comment>
<comment type="disruption phenotype">
    <text evidence="4">Growth of the pqiAB mutant is inhibited by 1% lauryl sulfobetaine (LSB) (PubMed:28819315). The pqiAB mutant is also sensitive to caprylyl sulfobetaine (PubMed:28819315).</text>
</comment>
<comment type="similarity">
    <text evidence="8">Belongs to the PqiB family.</text>
</comment>